<reference key="1">
    <citation type="journal article" date="2008" name="Cell. Mol. Life Sci.">
        <title>Molecular diversity and evolution of cystine knot toxins of the tarantula Chilobrachys jingzhao.</title>
        <authorList>
            <person name="Chen J."/>
            <person name="Deng M."/>
            <person name="He Q."/>
            <person name="Meng E."/>
            <person name="Jiang L."/>
            <person name="Liao Z."/>
            <person name="Rong M."/>
            <person name="Liang S."/>
        </authorList>
    </citation>
    <scope>NUCLEOTIDE SEQUENCE [LARGE SCALE MRNA]</scope>
    <source>
        <tissue>Venom gland</tissue>
    </source>
</reference>
<reference key="2">
    <citation type="journal article" date="2007" name="Proteomics">
        <title>Proteomic and peptidomic analysis of the venom from Chinese tarantula Chilobrachys jingzhao.</title>
        <authorList>
            <person name="Liao Z."/>
            <person name="Cao J."/>
            <person name="Li S."/>
            <person name="Yan X."/>
            <person name="Hu W."/>
            <person name="He Q."/>
            <person name="Chen J."/>
            <person name="Tang J."/>
            <person name="Xie J."/>
            <person name="Liang S."/>
        </authorList>
    </citation>
    <scope>PROTEIN SEQUENCE OF 51-84</scope>
    <scope>SUBCELLULAR LOCATION</scope>
    <source>
        <tissue>Venom</tissue>
    </source>
</reference>
<reference key="3">
    <citation type="journal article" date="2006" name="Biochemistry">
        <title>Solution structure and functional characterization of Jingzhaotoxin-XI: a novel gating modifier of both potassium and sodium channels.</title>
        <authorList>
            <person name="Liao Z."/>
            <person name="Yuan C."/>
            <person name="Deng M."/>
            <person name="Li J."/>
            <person name="Chen J."/>
            <person name="Yang Y."/>
            <person name="Hu W."/>
            <person name="Liang S."/>
        </authorList>
    </citation>
    <scope>PROTEIN SEQUENCE OF 51-84</scope>
    <scope>SUBCELLULAR LOCATION</scope>
    <scope>FUNCTION</scope>
    <scope>STRUCTURE BY NMR OF 51-84</scope>
    <scope>AMIDATION AT PHE-84</scope>
    <scope>DISULFIDE BONDS</scope>
    <scope>MASS SPECTROMETRY</scope>
    <source>
        <tissue>Venom</tissue>
    </source>
</reference>
<reference key="4">
    <citation type="journal article" date="2014" name="Toxicon">
        <title>The tarantula toxin jingzhaotoxin-XI (kappa-theraphotoxin-Cj1a) regulates the activation and inactivation of the voltage-gated sodium channel Nav1.5.</title>
        <authorList>
            <person name="Tang C."/>
            <person name="Zhou X."/>
            <person name="Huang Y."/>
            <person name="Zhang Y."/>
            <person name="Hu Z."/>
            <person name="Wang M."/>
            <person name="Chen P."/>
            <person name="Liu Z."/>
            <person name="Liang S."/>
        </authorList>
    </citation>
    <scope>PROTEIN SEQUENCE OF 51-84</scope>
    <scope>FUNCTION</scope>
    <scope>SUBCELLULAR LOCATION</scope>
    <scope>DISULFIDE BOND</scope>
    <source>
        <tissue>Venom</tissue>
    </source>
</reference>
<sequence>MKVSVLITLAVLGVMFVWASAAELEERGSDQRDSPAWLKSMERIFQSEERECRKMFGGCSVDSDCCAHLGCKPTLKYCAWDGTFGK</sequence>
<keyword id="KW-0027">Amidation</keyword>
<keyword id="KW-0903">Direct protein sequencing</keyword>
<keyword id="KW-1015">Disulfide bond</keyword>
<keyword id="KW-0872">Ion channel impairing toxin</keyword>
<keyword id="KW-0960">Knottin</keyword>
<keyword id="KW-0632">Potassium channel impairing toxin</keyword>
<keyword id="KW-0964">Secreted</keyword>
<keyword id="KW-0732">Signal</keyword>
<keyword id="KW-0800">Toxin</keyword>
<keyword id="KW-1220">Voltage-gated potassium channel impairing toxin</keyword>
<keyword id="KW-0738">Voltage-gated sodium channel impairing toxin</keyword>
<protein>
    <recommendedName>
        <fullName evidence="7">Kappa-theraphotoxin-Cg1a 6</fullName>
        <shortName evidence="7">Kappa-TRTX-Cg1a</shortName>
    </recommendedName>
    <alternativeName>
        <fullName>Jingzhaotoxin-11.6</fullName>
        <shortName>JZTX-11.6</shortName>
    </alternativeName>
    <alternativeName>
        <fullName evidence="5">Jingzhaotoxin-XI.6</fullName>
        <shortName evidence="5">JZTX-XI.6</shortName>
    </alternativeName>
    <alternativeName>
        <fullName evidence="6">Peptide F4-13.64</fullName>
    </alternativeName>
</protein>
<proteinExistence type="evidence at protein level"/>
<dbReference type="EMBL" id="EU233870">
    <property type="protein sequence ID" value="ABY71689.1"/>
    <property type="molecule type" value="mRNA"/>
</dbReference>
<dbReference type="SMR" id="B1P1D9"/>
<dbReference type="ArachnoServer" id="AS000043">
    <property type="toxin name" value="kappa-theraphotoxin-Cg1a"/>
</dbReference>
<dbReference type="GO" id="GO:0005576">
    <property type="term" value="C:extracellular region"/>
    <property type="evidence" value="ECO:0007669"/>
    <property type="project" value="UniProtKB-SubCell"/>
</dbReference>
<dbReference type="GO" id="GO:0008200">
    <property type="term" value="F:ion channel inhibitor activity"/>
    <property type="evidence" value="ECO:0007669"/>
    <property type="project" value="InterPro"/>
</dbReference>
<dbReference type="GO" id="GO:0015459">
    <property type="term" value="F:potassium channel regulator activity"/>
    <property type="evidence" value="ECO:0007669"/>
    <property type="project" value="UniProtKB-KW"/>
</dbReference>
<dbReference type="GO" id="GO:0017080">
    <property type="term" value="F:sodium channel regulator activity"/>
    <property type="evidence" value="ECO:0007669"/>
    <property type="project" value="UniProtKB-KW"/>
</dbReference>
<dbReference type="GO" id="GO:0090729">
    <property type="term" value="F:toxin activity"/>
    <property type="evidence" value="ECO:0007669"/>
    <property type="project" value="UniProtKB-KW"/>
</dbReference>
<dbReference type="InterPro" id="IPR011696">
    <property type="entry name" value="Huwentoxin-1"/>
</dbReference>
<dbReference type="Pfam" id="PF07740">
    <property type="entry name" value="Toxin_12"/>
    <property type="match status" value="1"/>
</dbReference>
<dbReference type="SUPFAM" id="SSF57059">
    <property type="entry name" value="omega toxin-like"/>
    <property type="match status" value="1"/>
</dbReference>
<name>JZ11F_CHIGU</name>
<accession>B1P1D9</accession>
<evidence type="ECO:0000255" key="1"/>
<evidence type="ECO:0000269" key="2">
    <source>
    </source>
</evidence>
<evidence type="ECO:0000269" key="3">
    <source>
    </source>
</evidence>
<evidence type="ECO:0000269" key="4">
    <source>
    </source>
</evidence>
<evidence type="ECO:0000303" key="5">
    <source>
    </source>
</evidence>
<evidence type="ECO:0000303" key="6">
    <source>
    </source>
</evidence>
<evidence type="ECO:0000303" key="7">
    <source>
    </source>
</evidence>
<evidence type="ECO:0000305" key="8"/>
<evidence type="ECO:0000305" key="9">
    <source>
    </source>
</evidence>
<evidence type="ECO:0000305" key="10">
    <source>
    </source>
</evidence>
<comment type="function">
    <text evidence="2 4">This toxin acts as a voltage-dependent gating-modifier (PubMed:25240294). It inhibits the sodium conductance (IC(50)=124 nM) and slows the fast inactivation (EC(50)=1180 nM) of Nav1.5/SCN5A (PubMed:17176080, PubMed:25240294). It significantly shifts the activation to more depolarized voltages and decreases the deactivation of Nav1.5 currents upon extreme depolarization, but only slightly affects voltage-dependence of steady-state inactivation (PubMed:17176080, PubMed:25240294). In addition, this toxin causes an approximately five-fold decrease in the rate of recovery from inactivation and an approximately 1.9-fold reduction in the closed-state inactivation rate (PubMed:25240294). This toxin integrates the functions of site 3 toxins (alpha-scorpion toxins) with site 4 toxins (beta-scorpion and spider toxins) by targeting multiple sites on Nav1.5 (PubMed:25240294). Also shows inhibition of voltage-gated potassium channels (5 uM completely inhibits Kv2.1/KCNB1, whereas 5 uM moderately inhibits Kv4.2/KCND2 Kv4.1/KCND1 channels) (PubMed:17176080).</text>
</comment>
<comment type="subcellular location">
    <subcellularLocation>
        <location evidence="2 3 4">Secreted</location>
    </subcellularLocation>
</comment>
<comment type="tissue specificity">
    <text evidence="9 10">Expressed by the venom gland.</text>
</comment>
<comment type="domain">
    <text evidence="4">The presence of a 'disulfide through disulfide knot' structurally defines this protein as a knottin.</text>
</comment>
<comment type="mass spectrometry">
    <text>Monoisotopic mass.</text>
</comment>
<comment type="miscellaneous">
    <text evidence="9">Negative results: does not show effect on Kv1.1/KCNA1, Kv1.2/KCNA2, Kv1.3/KCNA3, Kv1.4/KCNA4, Kv3.1/KCNC1 (all expressed in oocytes), voltage-gated sodium channels (Nav1) (from DRG neurons), and in a range of voltage-gated calcium channels (expressed in rat DRG neurons) (PubMed:17176080). In addition, does not show significant toxic symptoms when injected into mice and into cockroaches (PubMed:17176080).</text>
</comment>
<comment type="similarity">
    <text evidence="8">Belongs to the neurotoxin 10 (Hwtx-1) family. 28 (Jztx-11) subfamily.</text>
</comment>
<comment type="caution">
    <text evidence="8">Several genes are coding for this toxin for which the structure by NMR has been determined. The cross-references to PDB and additional information can be found in entry AC P0C247.</text>
</comment>
<organism>
    <name type="scientific">Chilobrachys guangxiensis</name>
    <name type="common">Chinese earth tiger tarantula</name>
    <name type="synonym">Chilobrachys jingzhao</name>
    <dbReference type="NCBI Taxonomy" id="278060"/>
    <lineage>
        <taxon>Eukaryota</taxon>
        <taxon>Metazoa</taxon>
        <taxon>Ecdysozoa</taxon>
        <taxon>Arthropoda</taxon>
        <taxon>Chelicerata</taxon>
        <taxon>Arachnida</taxon>
        <taxon>Araneae</taxon>
        <taxon>Mygalomorphae</taxon>
        <taxon>Theraphosidae</taxon>
        <taxon>Chilobrachys</taxon>
    </lineage>
</organism>
<feature type="signal peptide" evidence="1">
    <location>
        <begin position="1"/>
        <end position="21"/>
    </location>
</feature>
<feature type="propeptide" id="PRO_0000398411" evidence="2 3">
    <location>
        <begin position="22"/>
        <end position="50"/>
    </location>
</feature>
<feature type="peptide" id="PRO_0000398412" description="Kappa-theraphotoxin-Cg1a 6" evidence="2 3 4">
    <location>
        <begin position="51"/>
        <end position="84"/>
    </location>
</feature>
<feature type="modified residue" description="Phenylalanine amide" evidence="2">
    <location>
        <position position="84"/>
    </location>
</feature>
<feature type="disulfide bond" evidence="2">
    <location>
        <begin position="52"/>
        <end position="66"/>
    </location>
</feature>
<feature type="disulfide bond" evidence="2">
    <location>
        <begin position="59"/>
        <end position="71"/>
    </location>
</feature>
<feature type="disulfide bond" evidence="2">
    <location>
        <begin position="65"/>
        <end position="78"/>
    </location>
</feature>